<sequence length="284" mass="31820">MTAVKARAYWQLMRMDRPIGSLLLLWPTLWALLLAAQGLPDLRVLVVFVLGVFLMRSAGCVINDYADRHVDGHVKRTSQRPLPAGLVSAKEALLLFVLLAVSSFLLVLTMNTLTIQLSFIGILLAFVYPFMKRFTHLPQLVLGLAFSWSIPMAWAAQANTLTPQVWVLFLINALWTIAYDTQYAMVDRDDDVKIGIKSTAILFGRWDKRIIGLLQLATLSLLVALGQGLALGTSYYWGLLIAAGLFAYQQHLIRYRERMPCFQAFLNNNYVGMAITAGILLSVW</sequence>
<accession>Q9KVP7</accession>
<evidence type="ECO:0000255" key="1">
    <source>
        <dbReference type="HAMAP-Rule" id="MF_01635"/>
    </source>
</evidence>
<gene>
    <name evidence="1" type="primary">ubiA</name>
    <name type="ordered locus">VC_0094</name>
</gene>
<comment type="function">
    <text evidence="1">Catalyzes the prenylation of para-hydroxybenzoate (PHB) with an all-trans polyprenyl group. Mediates the second step in the final reaction sequence of ubiquinone-8 (UQ-8) biosynthesis, which is the condensation of the polyisoprenoid side chain with PHB, generating the first membrane-bound Q intermediate 3-octaprenyl-4-hydroxybenzoate.</text>
</comment>
<comment type="catalytic activity">
    <reaction evidence="1">
        <text>all-trans-octaprenyl diphosphate + 4-hydroxybenzoate = 4-hydroxy-3-(all-trans-octaprenyl)benzoate + diphosphate</text>
        <dbReference type="Rhea" id="RHEA:27782"/>
        <dbReference type="ChEBI" id="CHEBI:1617"/>
        <dbReference type="ChEBI" id="CHEBI:17879"/>
        <dbReference type="ChEBI" id="CHEBI:33019"/>
        <dbReference type="ChEBI" id="CHEBI:57711"/>
        <dbReference type="EC" id="2.5.1.39"/>
    </reaction>
</comment>
<comment type="cofactor">
    <cofactor evidence="1">
        <name>Mg(2+)</name>
        <dbReference type="ChEBI" id="CHEBI:18420"/>
    </cofactor>
</comment>
<comment type="pathway">
    <text evidence="1">Cofactor biosynthesis; ubiquinone biosynthesis.</text>
</comment>
<comment type="subcellular location">
    <subcellularLocation>
        <location evidence="1">Cell inner membrane</location>
        <topology evidence="1">Multi-pass membrane protein</topology>
    </subcellularLocation>
</comment>
<comment type="similarity">
    <text evidence="1">Belongs to the UbiA prenyltransferase family.</text>
</comment>
<feature type="chain" id="PRO_0000262849" description="4-hydroxybenzoate octaprenyltransferase">
    <location>
        <begin position="1"/>
        <end position="284"/>
    </location>
</feature>
<feature type="transmembrane region" description="Helical" evidence="1">
    <location>
        <begin position="19"/>
        <end position="39"/>
    </location>
</feature>
<feature type="transmembrane region" description="Helical" evidence="1">
    <location>
        <begin position="42"/>
        <end position="62"/>
    </location>
</feature>
<feature type="transmembrane region" description="Helical" evidence="1">
    <location>
        <begin position="93"/>
        <end position="113"/>
    </location>
</feature>
<feature type="transmembrane region" description="Helical" evidence="1">
    <location>
        <begin position="114"/>
        <end position="134"/>
    </location>
</feature>
<feature type="transmembrane region" description="Helical" evidence="1">
    <location>
        <begin position="136"/>
        <end position="156"/>
    </location>
</feature>
<feature type="transmembrane region" description="Helical" evidence="1">
    <location>
        <begin position="158"/>
        <end position="178"/>
    </location>
</feature>
<feature type="transmembrane region" description="Helical" evidence="1">
    <location>
        <begin position="210"/>
        <end position="230"/>
    </location>
</feature>
<feature type="transmembrane region" description="Helical" evidence="1">
    <location>
        <begin position="233"/>
        <end position="253"/>
    </location>
</feature>
<feature type="transmembrane region" description="Helical" evidence="1">
    <location>
        <begin position="264"/>
        <end position="284"/>
    </location>
</feature>
<name>UBIA_VIBCH</name>
<organism>
    <name type="scientific">Vibrio cholerae serotype O1 (strain ATCC 39315 / El Tor Inaba N16961)</name>
    <dbReference type="NCBI Taxonomy" id="243277"/>
    <lineage>
        <taxon>Bacteria</taxon>
        <taxon>Pseudomonadati</taxon>
        <taxon>Pseudomonadota</taxon>
        <taxon>Gammaproteobacteria</taxon>
        <taxon>Vibrionales</taxon>
        <taxon>Vibrionaceae</taxon>
        <taxon>Vibrio</taxon>
    </lineage>
</organism>
<reference key="1">
    <citation type="journal article" date="2000" name="Nature">
        <title>DNA sequence of both chromosomes of the cholera pathogen Vibrio cholerae.</title>
        <authorList>
            <person name="Heidelberg J.F."/>
            <person name="Eisen J.A."/>
            <person name="Nelson W.C."/>
            <person name="Clayton R.A."/>
            <person name="Gwinn M.L."/>
            <person name="Dodson R.J."/>
            <person name="Haft D.H."/>
            <person name="Hickey E.K."/>
            <person name="Peterson J.D."/>
            <person name="Umayam L.A."/>
            <person name="Gill S.R."/>
            <person name="Nelson K.E."/>
            <person name="Read T.D."/>
            <person name="Tettelin H."/>
            <person name="Richardson D.L."/>
            <person name="Ermolaeva M.D."/>
            <person name="Vamathevan J.J."/>
            <person name="Bass S."/>
            <person name="Qin H."/>
            <person name="Dragoi I."/>
            <person name="Sellers P."/>
            <person name="McDonald L.A."/>
            <person name="Utterback T.R."/>
            <person name="Fleischmann R.D."/>
            <person name="Nierman W.C."/>
            <person name="White O."/>
            <person name="Salzberg S.L."/>
            <person name="Smith H.O."/>
            <person name="Colwell R.R."/>
            <person name="Mekalanos J.J."/>
            <person name="Venter J.C."/>
            <person name="Fraser C.M."/>
        </authorList>
    </citation>
    <scope>NUCLEOTIDE SEQUENCE [LARGE SCALE GENOMIC DNA]</scope>
    <source>
        <strain>ATCC 39315 / El Tor Inaba N16961</strain>
    </source>
</reference>
<keyword id="KW-0997">Cell inner membrane</keyword>
<keyword id="KW-1003">Cell membrane</keyword>
<keyword id="KW-0460">Magnesium</keyword>
<keyword id="KW-0472">Membrane</keyword>
<keyword id="KW-1185">Reference proteome</keyword>
<keyword id="KW-0808">Transferase</keyword>
<keyword id="KW-0812">Transmembrane</keyword>
<keyword id="KW-1133">Transmembrane helix</keyword>
<keyword id="KW-0831">Ubiquinone biosynthesis</keyword>
<protein>
    <recommendedName>
        <fullName evidence="1">4-hydroxybenzoate octaprenyltransferase</fullName>
        <ecNumber evidence="1">2.5.1.39</ecNumber>
    </recommendedName>
    <alternativeName>
        <fullName evidence="1">4-HB polyprenyltransferase</fullName>
    </alternativeName>
</protein>
<dbReference type="EC" id="2.5.1.39" evidence="1"/>
<dbReference type="EMBL" id="AE003852">
    <property type="protein sequence ID" value="AAF93272.1"/>
    <property type="molecule type" value="Genomic_DNA"/>
</dbReference>
<dbReference type="PIR" id="C82365">
    <property type="entry name" value="C82365"/>
</dbReference>
<dbReference type="RefSeq" id="NP_229753.1">
    <property type="nucleotide sequence ID" value="NC_002505.1"/>
</dbReference>
<dbReference type="RefSeq" id="WP_000127681.1">
    <property type="nucleotide sequence ID" value="NZ_LT906614.1"/>
</dbReference>
<dbReference type="SMR" id="Q9KVP7"/>
<dbReference type="STRING" id="243277.VC_0094"/>
<dbReference type="DNASU" id="2615771"/>
<dbReference type="EnsemblBacteria" id="AAF93272">
    <property type="protein sequence ID" value="AAF93272"/>
    <property type="gene ID" value="VC_0094"/>
</dbReference>
<dbReference type="KEGG" id="vch:VC_0094"/>
<dbReference type="PATRIC" id="fig|243277.26.peg.91"/>
<dbReference type="eggNOG" id="COG0382">
    <property type="taxonomic scope" value="Bacteria"/>
</dbReference>
<dbReference type="HOGENOM" id="CLU_034879_1_0_6"/>
<dbReference type="UniPathway" id="UPA00232"/>
<dbReference type="Proteomes" id="UP000000584">
    <property type="component" value="Chromosome 1"/>
</dbReference>
<dbReference type="GO" id="GO:0005886">
    <property type="term" value="C:plasma membrane"/>
    <property type="evidence" value="ECO:0000318"/>
    <property type="project" value="GO_Central"/>
</dbReference>
<dbReference type="GO" id="GO:0008412">
    <property type="term" value="F:4-hydroxybenzoate polyprenyltransferase activity"/>
    <property type="evidence" value="ECO:0000318"/>
    <property type="project" value="GO_Central"/>
</dbReference>
<dbReference type="GO" id="GO:0006744">
    <property type="term" value="P:ubiquinone biosynthetic process"/>
    <property type="evidence" value="ECO:0000318"/>
    <property type="project" value="GO_Central"/>
</dbReference>
<dbReference type="CDD" id="cd13959">
    <property type="entry name" value="PT_UbiA_COQ2"/>
    <property type="match status" value="1"/>
</dbReference>
<dbReference type="FunFam" id="1.10.357.140:FF:000002">
    <property type="entry name" value="4-hydroxybenzoate octaprenyltransferase"/>
    <property type="match status" value="1"/>
</dbReference>
<dbReference type="FunFam" id="1.20.120.1780:FF:000001">
    <property type="entry name" value="4-hydroxybenzoate octaprenyltransferase"/>
    <property type="match status" value="1"/>
</dbReference>
<dbReference type="Gene3D" id="1.10.357.140">
    <property type="entry name" value="UbiA prenyltransferase"/>
    <property type="match status" value="1"/>
</dbReference>
<dbReference type="Gene3D" id="1.20.120.1780">
    <property type="entry name" value="UbiA prenyltransferase"/>
    <property type="match status" value="1"/>
</dbReference>
<dbReference type="HAMAP" id="MF_01635">
    <property type="entry name" value="UbiA"/>
    <property type="match status" value="1"/>
</dbReference>
<dbReference type="InterPro" id="IPR006370">
    <property type="entry name" value="HB_polyprenyltransferase-like"/>
</dbReference>
<dbReference type="InterPro" id="IPR039653">
    <property type="entry name" value="Prenyltransferase"/>
</dbReference>
<dbReference type="InterPro" id="IPR000537">
    <property type="entry name" value="UbiA_prenyltransferase"/>
</dbReference>
<dbReference type="InterPro" id="IPR044878">
    <property type="entry name" value="UbiA_sf"/>
</dbReference>
<dbReference type="NCBIfam" id="TIGR01474">
    <property type="entry name" value="ubiA_proteo"/>
    <property type="match status" value="1"/>
</dbReference>
<dbReference type="PANTHER" id="PTHR11048:SF28">
    <property type="entry name" value="4-HYDROXYBENZOATE POLYPRENYLTRANSFERASE, MITOCHONDRIAL"/>
    <property type="match status" value="1"/>
</dbReference>
<dbReference type="PANTHER" id="PTHR11048">
    <property type="entry name" value="PRENYLTRANSFERASES"/>
    <property type="match status" value="1"/>
</dbReference>
<dbReference type="Pfam" id="PF01040">
    <property type="entry name" value="UbiA"/>
    <property type="match status" value="1"/>
</dbReference>
<proteinExistence type="inferred from homology"/>